<protein>
    <recommendedName>
        <fullName>Follitropin subunit beta</fullName>
    </recommendedName>
    <alternativeName>
        <fullName>Follicle-stimulating hormone beta subunit</fullName>
        <shortName>FSH-B</shortName>
        <shortName>FSH-beta</shortName>
    </alternativeName>
    <alternativeName>
        <fullName>Follitropin beta chain</fullName>
    </alternativeName>
</protein>
<feature type="signal peptide" evidence="1">
    <location>
        <begin position="1"/>
        <end position="20"/>
    </location>
</feature>
<feature type="chain" id="PRO_0000226049" description="Follitropin subunit beta">
    <location>
        <begin position="21"/>
        <end position="129"/>
    </location>
</feature>
<feature type="glycosylation site" description="N-linked (GlcNAc...) asparagine" evidence="2">
    <location>
        <position position="25"/>
    </location>
</feature>
<feature type="glycosylation site" description="N-linked (GlcNAc...) asparagine" evidence="2">
    <location>
        <position position="42"/>
    </location>
</feature>
<feature type="disulfide bond" evidence="2">
    <location>
        <begin position="21"/>
        <end position="69"/>
    </location>
</feature>
<feature type="disulfide bond" evidence="2">
    <location>
        <begin position="35"/>
        <end position="84"/>
    </location>
</feature>
<feature type="disulfide bond" evidence="2">
    <location>
        <begin position="38"/>
        <end position="122"/>
    </location>
</feature>
<feature type="disulfide bond" evidence="2">
    <location>
        <begin position="46"/>
        <end position="100"/>
    </location>
</feature>
<feature type="disulfide bond" evidence="2">
    <location>
        <begin position="50"/>
        <end position="102"/>
    </location>
</feature>
<feature type="disulfide bond" evidence="2">
    <location>
        <begin position="105"/>
        <end position="112"/>
    </location>
</feature>
<reference key="1">
    <citation type="submission" date="2005-11" db="EMBL/GenBank/DDBJ databases">
        <title>FSHB gene has two major haplotypes.</title>
        <authorList>
            <person name="Grigorova M."/>
            <person name="Laan M."/>
        </authorList>
    </citation>
    <scope>NUCLEOTIDE SEQUENCE [GENOMIC DNA]</scope>
</reference>
<proteinExistence type="inferred from homology"/>
<accession>Q2PUH2</accession>
<evidence type="ECO:0000250" key="1"/>
<evidence type="ECO:0000250" key="2">
    <source>
        <dbReference type="UniProtKB" id="P01225"/>
    </source>
</evidence>
<evidence type="ECO:0000305" key="3"/>
<keyword id="KW-1015">Disulfide bond</keyword>
<keyword id="KW-0325">Glycoprotein</keyword>
<keyword id="KW-0372">Hormone</keyword>
<keyword id="KW-1185">Reference proteome</keyword>
<keyword id="KW-0964">Secreted</keyword>
<keyword id="KW-0732">Signal</keyword>
<dbReference type="EMBL" id="DQ302103">
    <property type="protein sequence ID" value="ABC01994.1"/>
    <property type="molecule type" value="Genomic_DNA"/>
</dbReference>
<dbReference type="RefSeq" id="NP_001065282.1">
    <property type="nucleotide sequence ID" value="NM_001071814.1"/>
</dbReference>
<dbReference type="RefSeq" id="XP_009458388.1">
    <property type="nucleotide sequence ID" value="XM_009460113.1"/>
</dbReference>
<dbReference type="RefSeq" id="XP_009458389.1">
    <property type="nucleotide sequence ID" value="XM_009460114.1"/>
</dbReference>
<dbReference type="SMR" id="Q2PUH2"/>
<dbReference type="FunCoup" id="Q2PUH2">
    <property type="interactions" value="625"/>
</dbReference>
<dbReference type="STRING" id="9598.ENSPTRP00000006017"/>
<dbReference type="GlyCosmos" id="Q2PUH2">
    <property type="glycosylation" value="2 sites, No reported glycans"/>
</dbReference>
<dbReference type="PaxDb" id="9598-ENSPTRP00000006017"/>
<dbReference type="Ensembl" id="ENSPTRT00000006527.4">
    <property type="protein sequence ID" value="ENSPTRP00000006017.3"/>
    <property type="gene ID" value="ENSPTRG00000003463.4"/>
</dbReference>
<dbReference type="GeneID" id="736618"/>
<dbReference type="KEGG" id="ptr:736618"/>
<dbReference type="CTD" id="2488"/>
<dbReference type="VGNC" id="VGNC:6558">
    <property type="gene designation" value="FSHB"/>
</dbReference>
<dbReference type="eggNOG" id="ENOG502S39C">
    <property type="taxonomic scope" value="Eukaryota"/>
</dbReference>
<dbReference type="GeneTree" id="ENSGT00940000160051"/>
<dbReference type="HOGENOM" id="CLU_126319_3_0_1"/>
<dbReference type="InParanoid" id="Q2PUH2"/>
<dbReference type="OMA" id="PVATGCH"/>
<dbReference type="OrthoDB" id="8at9604"/>
<dbReference type="TreeFam" id="TF332940"/>
<dbReference type="Proteomes" id="UP000002277">
    <property type="component" value="Chromosome 11"/>
</dbReference>
<dbReference type="Bgee" id="ENSPTRG00000003463">
    <property type="expression patterns" value="Expressed in pituitary gland"/>
</dbReference>
<dbReference type="GO" id="GO:0005737">
    <property type="term" value="C:cytoplasm"/>
    <property type="evidence" value="ECO:0000318"/>
    <property type="project" value="GO_Central"/>
</dbReference>
<dbReference type="GO" id="GO:0005615">
    <property type="term" value="C:extracellular space"/>
    <property type="evidence" value="ECO:0000250"/>
    <property type="project" value="UniProtKB"/>
</dbReference>
<dbReference type="GO" id="GO:0016914">
    <property type="term" value="C:follicle-stimulating hormone complex"/>
    <property type="evidence" value="ECO:0000250"/>
    <property type="project" value="UniProtKB"/>
</dbReference>
<dbReference type="GO" id="GO:0016913">
    <property type="term" value="F:follicle-stimulating hormone activity"/>
    <property type="evidence" value="ECO:0000250"/>
    <property type="project" value="UniProtKB"/>
</dbReference>
<dbReference type="GO" id="GO:0042699">
    <property type="term" value="P:follicle-stimulating hormone signaling pathway"/>
    <property type="evidence" value="ECO:0000318"/>
    <property type="project" value="GO_Central"/>
</dbReference>
<dbReference type="GO" id="GO:0007186">
    <property type="term" value="P:G protein-coupled receptor signaling pathway"/>
    <property type="evidence" value="ECO:0000250"/>
    <property type="project" value="UniProtKB"/>
</dbReference>
<dbReference type="GO" id="GO:0045780">
    <property type="term" value="P:positive regulation of bone resorption"/>
    <property type="evidence" value="ECO:0007669"/>
    <property type="project" value="Ensembl"/>
</dbReference>
<dbReference type="GO" id="GO:0010628">
    <property type="term" value="P:positive regulation of gene expression"/>
    <property type="evidence" value="ECO:0007669"/>
    <property type="project" value="Ensembl"/>
</dbReference>
<dbReference type="GO" id="GO:0010893">
    <property type="term" value="P:positive regulation of steroid biosynthetic process"/>
    <property type="evidence" value="ECO:0007669"/>
    <property type="project" value="Ensembl"/>
</dbReference>
<dbReference type="GO" id="GO:0045670">
    <property type="term" value="P:regulation of osteoclast differentiation"/>
    <property type="evidence" value="ECO:0007669"/>
    <property type="project" value="Ensembl"/>
</dbReference>
<dbReference type="GO" id="GO:0010469">
    <property type="term" value="P:regulation of signaling receptor activity"/>
    <property type="evidence" value="ECO:0000250"/>
    <property type="project" value="UniProtKB"/>
</dbReference>
<dbReference type="GO" id="GO:0060011">
    <property type="term" value="P:Sertoli cell proliferation"/>
    <property type="evidence" value="ECO:0007669"/>
    <property type="project" value="Ensembl"/>
</dbReference>
<dbReference type="GO" id="GO:0007283">
    <property type="term" value="P:spermatogenesis"/>
    <property type="evidence" value="ECO:0007669"/>
    <property type="project" value="Ensembl"/>
</dbReference>
<dbReference type="GO" id="GO:0007179">
    <property type="term" value="P:transforming growth factor beta receptor signaling pathway"/>
    <property type="evidence" value="ECO:0007669"/>
    <property type="project" value="Ensembl"/>
</dbReference>
<dbReference type="CDD" id="cd00069">
    <property type="entry name" value="GHB_like"/>
    <property type="match status" value="1"/>
</dbReference>
<dbReference type="FunFam" id="2.10.90.10:FF:000007">
    <property type="entry name" value="Luteinizing hormone beta subunit"/>
    <property type="match status" value="1"/>
</dbReference>
<dbReference type="Gene3D" id="2.10.90.10">
    <property type="entry name" value="Cystine-knot cytokines"/>
    <property type="match status" value="1"/>
</dbReference>
<dbReference type="InterPro" id="IPR029034">
    <property type="entry name" value="Cystine-knot_cytokine"/>
</dbReference>
<dbReference type="InterPro" id="IPR006208">
    <property type="entry name" value="Glyco_hormone_CN"/>
</dbReference>
<dbReference type="InterPro" id="IPR001545">
    <property type="entry name" value="Gonadotropin_bsu"/>
</dbReference>
<dbReference type="InterPro" id="IPR018245">
    <property type="entry name" value="Gonadotropin_bsu_CS"/>
</dbReference>
<dbReference type="PANTHER" id="PTHR11515:SF17">
    <property type="entry name" value="FOLLITROPIN SUBUNIT BETA"/>
    <property type="match status" value="1"/>
</dbReference>
<dbReference type="PANTHER" id="PTHR11515">
    <property type="entry name" value="GLYCOPROTEIN HORMONE BETA CHAIN"/>
    <property type="match status" value="1"/>
</dbReference>
<dbReference type="Pfam" id="PF00007">
    <property type="entry name" value="Cys_knot"/>
    <property type="match status" value="1"/>
</dbReference>
<dbReference type="SMART" id="SM00068">
    <property type="entry name" value="GHB"/>
    <property type="match status" value="1"/>
</dbReference>
<dbReference type="SUPFAM" id="SSF57501">
    <property type="entry name" value="Cystine-knot cytokines"/>
    <property type="match status" value="1"/>
</dbReference>
<dbReference type="PROSITE" id="PS00261">
    <property type="entry name" value="GLYCO_HORMONE_BETA_1"/>
    <property type="match status" value="1"/>
</dbReference>
<dbReference type="PROSITE" id="PS00689">
    <property type="entry name" value="GLYCO_HORMONE_BETA_2"/>
    <property type="match status" value="1"/>
</dbReference>
<sequence length="129" mass="14660">MKTLQFFFLFCCWKAICCNSCELTNITIAIEKEECRFCISINTTWCAGHCYTRDLVYKDPARPNIQKTCTFKELVYETVRVPGCAHHADSLYTYPVATQCHCGKCDSDSTDCTVRGLGPSYCSFGEMKE</sequence>
<name>FSHB_PANTR</name>
<gene>
    <name type="primary">FSHB</name>
</gene>
<comment type="function">
    <text evidence="2">Together with the alpha chain CGA constitutes follitropin, the follicle-stimulating hormone, and provides its biological specificity to the hormone heterodimer. Binds FSHR, a G protein-coupled receptor, on target cells to activate downstream signaling pathways. Follitropin is involved in follicle development and spermatogenesis in reproductive organs.</text>
</comment>
<comment type="subunit">
    <text evidence="2">Heterodimer. The active follitropin is a heterodimer composed of an alpha chain/CGA shared with other hormones and a unique beta chain/FSHB shown here.</text>
</comment>
<comment type="subcellular location">
    <subcellularLocation>
        <location evidence="2">Secreted</location>
    </subcellularLocation>
    <text evidence="2">Efficient secretion requires dimerization with CGA.</text>
</comment>
<comment type="similarity">
    <text evidence="3">Belongs to the glycoprotein hormones subunit beta family.</text>
</comment>
<organism>
    <name type="scientific">Pan troglodytes</name>
    <name type="common">Chimpanzee</name>
    <dbReference type="NCBI Taxonomy" id="9598"/>
    <lineage>
        <taxon>Eukaryota</taxon>
        <taxon>Metazoa</taxon>
        <taxon>Chordata</taxon>
        <taxon>Craniata</taxon>
        <taxon>Vertebrata</taxon>
        <taxon>Euteleostomi</taxon>
        <taxon>Mammalia</taxon>
        <taxon>Eutheria</taxon>
        <taxon>Euarchontoglires</taxon>
        <taxon>Primates</taxon>
        <taxon>Haplorrhini</taxon>
        <taxon>Catarrhini</taxon>
        <taxon>Hominidae</taxon>
        <taxon>Pan</taxon>
    </lineage>
</organism>